<keyword id="KW-1003">Cell membrane</keyword>
<keyword id="KW-0210">Decarboxylase</keyword>
<keyword id="KW-0444">Lipid biosynthesis</keyword>
<keyword id="KW-0443">Lipid metabolism</keyword>
<keyword id="KW-0456">Lyase</keyword>
<keyword id="KW-0472">Membrane</keyword>
<keyword id="KW-0594">Phospholipid biosynthesis</keyword>
<keyword id="KW-1208">Phospholipid metabolism</keyword>
<keyword id="KW-0670">Pyruvate</keyword>
<keyword id="KW-0865">Zymogen</keyword>
<evidence type="ECO:0000255" key="1">
    <source>
        <dbReference type="HAMAP-Rule" id="MF_00662"/>
    </source>
</evidence>
<protein>
    <recommendedName>
        <fullName evidence="1">Phosphatidylserine decarboxylase proenzyme</fullName>
        <ecNumber evidence="1">4.1.1.65</ecNumber>
    </recommendedName>
    <component>
        <recommendedName>
            <fullName evidence="1">Phosphatidylserine decarboxylase alpha chain</fullName>
        </recommendedName>
    </component>
    <component>
        <recommendedName>
            <fullName evidence="1">Phosphatidylserine decarboxylase beta chain</fullName>
        </recommendedName>
    </component>
</protein>
<comment type="function">
    <text evidence="1">Catalyzes the formation of phosphatidylethanolamine (PtdEtn) from phosphatidylserine (PtdSer).</text>
</comment>
<comment type="catalytic activity">
    <reaction evidence="1">
        <text>a 1,2-diacyl-sn-glycero-3-phospho-L-serine + H(+) = a 1,2-diacyl-sn-glycero-3-phosphoethanolamine + CO2</text>
        <dbReference type="Rhea" id="RHEA:20828"/>
        <dbReference type="ChEBI" id="CHEBI:15378"/>
        <dbReference type="ChEBI" id="CHEBI:16526"/>
        <dbReference type="ChEBI" id="CHEBI:57262"/>
        <dbReference type="ChEBI" id="CHEBI:64612"/>
        <dbReference type="EC" id="4.1.1.65"/>
    </reaction>
</comment>
<comment type="cofactor">
    <cofactor evidence="1">
        <name>pyruvate</name>
        <dbReference type="ChEBI" id="CHEBI:15361"/>
    </cofactor>
    <text evidence="1">Binds 1 pyruvoyl group covalently per subunit.</text>
</comment>
<comment type="pathway">
    <text evidence="1">Phospholipid metabolism; phosphatidylethanolamine biosynthesis; phosphatidylethanolamine from CDP-diacylglycerol: step 2/2.</text>
</comment>
<comment type="subunit">
    <text evidence="1">Heterodimer of a large membrane-associated beta subunit and a small pyruvoyl-containing alpha subunit.</text>
</comment>
<comment type="subcellular location">
    <subcellularLocation>
        <location evidence="1">Cell membrane</location>
        <topology evidence="1">Peripheral membrane protein</topology>
    </subcellularLocation>
</comment>
<comment type="PTM">
    <text evidence="1">Is synthesized initially as an inactive proenzyme. Formation of the active enzyme involves a self-maturation process in which the active site pyruvoyl group is generated from an internal serine residue via an autocatalytic post-translational modification. Two non-identical subunits are generated from the proenzyme in this reaction, and the pyruvate is formed at the N-terminus of the alpha chain, which is derived from the carboxyl end of the proenzyme. The autoendoproteolytic cleavage occurs by a canonical serine protease mechanism, in which the side chain hydroxyl group of the serine supplies its oxygen atom to form the C-terminus of the beta chain, while the remainder of the serine residue undergoes an oxidative deamination to produce ammonia and the pyruvoyl prosthetic group on the alpha chain. During this reaction, the Ser that is part of the protease active site of the proenzyme becomes the pyruvoyl prosthetic group, which constitutes an essential element of the active site of the mature decarboxylase.</text>
</comment>
<comment type="similarity">
    <text evidence="1">Belongs to the phosphatidylserine decarboxylase family. PSD-B subfamily. Prokaryotic type I sub-subfamily.</text>
</comment>
<sequence length="262" mass="29784">MRRTLYRLMIELTNGRFTSYILRKFAQSRLSSIIIPSYVKVFQINQDEMEKGLKEYGTLHDLFTRRLKEGKRSIDTDASSIVSPVDGVFADQGPIEDTKTFDIKGKRYSIVDMLGNEERAKRYAGGTYMVIYLSPSHYHRIHSPLSGSVTERFVLGRKSYPVNAAGMEYGKEPLSKNYRSVTEVNSDGEHMALVKVGAMFINSIELLHERSTVQKGEEMAYFTFGSTVVLLFEKDMIKAVQELTSGQELRLGEKIATRVSHK</sequence>
<name>PSD_BACMK</name>
<reference key="1">
    <citation type="journal article" date="2008" name="Chem. Biol. Interact.">
        <title>Extending the Bacillus cereus group genomics to putative food-borne pathogens of different toxicity.</title>
        <authorList>
            <person name="Lapidus A."/>
            <person name="Goltsman E."/>
            <person name="Auger S."/>
            <person name="Galleron N."/>
            <person name="Segurens B."/>
            <person name="Dossat C."/>
            <person name="Land M.L."/>
            <person name="Broussolle V."/>
            <person name="Brillard J."/>
            <person name="Guinebretiere M.-H."/>
            <person name="Sanchis V."/>
            <person name="Nguen-the C."/>
            <person name="Lereclus D."/>
            <person name="Richardson P."/>
            <person name="Wincker P."/>
            <person name="Weissenbach J."/>
            <person name="Ehrlich S.D."/>
            <person name="Sorokin A."/>
        </authorList>
    </citation>
    <scope>NUCLEOTIDE SEQUENCE [LARGE SCALE GENOMIC DNA]</scope>
    <source>
        <strain>KBAB4</strain>
    </source>
</reference>
<dbReference type="EC" id="4.1.1.65" evidence="1"/>
<dbReference type="EMBL" id="CP000903">
    <property type="protein sequence ID" value="ABY45350.1"/>
    <property type="molecule type" value="Genomic_DNA"/>
</dbReference>
<dbReference type="RefSeq" id="WP_012261725.1">
    <property type="nucleotide sequence ID" value="NC_010184.1"/>
</dbReference>
<dbReference type="SMR" id="A9VHW5"/>
<dbReference type="KEGG" id="bwe:BcerKBAB4_4189"/>
<dbReference type="eggNOG" id="COG0688">
    <property type="taxonomic scope" value="Bacteria"/>
</dbReference>
<dbReference type="HOGENOM" id="CLU_029061_4_0_9"/>
<dbReference type="UniPathway" id="UPA00558">
    <property type="reaction ID" value="UER00616"/>
</dbReference>
<dbReference type="Proteomes" id="UP000002154">
    <property type="component" value="Chromosome"/>
</dbReference>
<dbReference type="GO" id="GO:0005886">
    <property type="term" value="C:plasma membrane"/>
    <property type="evidence" value="ECO:0007669"/>
    <property type="project" value="UniProtKB-SubCell"/>
</dbReference>
<dbReference type="GO" id="GO:0004609">
    <property type="term" value="F:phosphatidylserine decarboxylase activity"/>
    <property type="evidence" value="ECO:0007669"/>
    <property type="project" value="UniProtKB-UniRule"/>
</dbReference>
<dbReference type="GO" id="GO:0006646">
    <property type="term" value="P:phosphatidylethanolamine biosynthetic process"/>
    <property type="evidence" value="ECO:0007669"/>
    <property type="project" value="UniProtKB-UniRule"/>
</dbReference>
<dbReference type="HAMAP" id="MF_00662">
    <property type="entry name" value="PS_decarb_PSD_B_type1"/>
    <property type="match status" value="1"/>
</dbReference>
<dbReference type="InterPro" id="IPR003817">
    <property type="entry name" value="PS_Dcarbxylase"/>
</dbReference>
<dbReference type="InterPro" id="IPR033177">
    <property type="entry name" value="PSD-B"/>
</dbReference>
<dbReference type="InterPro" id="IPR033178">
    <property type="entry name" value="PSD_type1_pro"/>
</dbReference>
<dbReference type="NCBIfam" id="NF002853">
    <property type="entry name" value="PRK03140.1"/>
    <property type="match status" value="1"/>
</dbReference>
<dbReference type="NCBIfam" id="TIGR00163">
    <property type="entry name" value="PS_decarb"/>
    <property type="match status" value="1"/>
</dbReference>
<dbReference type="PANTHER" id="PTHR10067">
    <property type="entry name" value="PHOSPHATIDYLSERINE DECARBOXYLASE"/>
    <property type="match status" value="1"/>
</dbReference>
<dbReference type="PANTHER" id="PTHR10067:SF6">
    <property type="entry name" value="PHOSPHATIDYLSERINE DECARBOXYLASE PROENZYME, MITOCHONDRIAL"/>
    <property type="match status" value="1"/>
</dbReference>
<dbReference type="Pfam" id="PF02666">
    <property type="entry name" value="PS_Dcarbxylase"/>
    <property type="match status" value="1"/>
</dbReference>
<feature type="chain" id="PRO_1000131348" description="Phosphatidylserine decarboxylase beta chain" evidence="1">
    <location>
        <begin position="1"/>
        <end position="225"/>
    </location>
</feature>
<feature type="chain" id="PRO_1000131349" description="Phosphatidylserine decarboxylase alpha chain" evidence="1">
    <location>
        <begin position="226"/>
        <end position="262"/>
    </location>
</feature>
<feature type="active site" description="Charge relay system; for autoendoproteolytic cleavage activity" evidence="1">
    <location>
        <position position="86"/>
    </location>
</feature>
<feature type="active site" description="Charge relay system; for autoendoproteolytic cleavage activity" evidence="1">
    <location>
        <position position="142"/>
    </location>
</feature>
<feature type="active site" description="Charge relay system; for autoendoproteolytic cleavage activity" evidence="1">
    <location>
        <position position="226"/>
    </location>
</feature>
<feature type="active site" description="Schiff-base intermediate with substrate; via pyruvic acid; for decarboxylase activity" evidence="1">
    <location>
        <position position="226"/>
    </location>
</feature>
<feature type="site" description="Cleavage (non-hydrolytic); by autocatalysis" evidence="1">
    <location>
        <begin position="225"/>
        <end position="226"/>
    </location>
</feature>
<feature type="modified residue" description="Pyruvic acid (Ser); by autocatalysis" evidence="1">
    <location>
        <position position="226"/>
    </location>
</feature>
<organism>
    <name type="scientific">Bacillus mycoides (strain KBAB4)</name>
    <name type="common">Bacillus weihenstephanensis</name>
    <dbReference type="NCBI Taxonomy" id="315730"/>
    <lineage>
        <taxon>Bacteria</taxon>
        <taxon>Bacillati</taxon>
        <taxon>Bacillota</taxon>
        <taxon>Bacilli</taxon>
        <taxon>Bacillales</taxon>
        <taxon>Bacillaceae</taxon>
        <taxon>Bacillus</taxon>
        <taxon>Bacillus cereus group</taxon>
    </lineage>
</organism>
<accession>A9VHW5</accession>
<gene>
    <name evidence="1" type="primary">psd</name>
    <name type="ordered locus">BcerKBAB4_4189</name>
</gene>
<proteinExistence type="inferred from homology"/>